<organism>
    <name type="scientific">Homo sapiens</name>
    <name type="common">Human</name>
    <dbReference type="NCBI Taxonomy" id="9606"/>
    <lineage>
        <taxon>Eukaryota</taxon>
        <taxon>Metazoa</taxon>
        <taxon>Chordata</taxon>
        <taxon>Craniata</taxon>
        <taxon>Vertebrata</taxon>
        <taxon>Euteleostomi</taxon>
        <taxon>Mammalia</taxon>
        <taxon>Eutheria</taxon>
        <taxon>Euarchontoglires</taxon>
        <taxon>Primates</taxon>
        <taxon>Haplorrhini</taxon>
        <taxon>Catarrhini</taxon>
        <taxon>Hominidae</taxon>
        <taxon>Homo</taxon>
    </lineage>
</organism>
<dbReference type="EC" id="1.1.3.15" evidence="14 15 16 17"/>
<dbReference type="EC" id="1.2.3.5" evidence="14 16 17"/>
<dbReference type="EMBL" id="AF244134">
    <property type="protein sequence ID" value="AAF63219.1"/>
    <property type="molecule type" value="mRNA"/>
</dbReference>
<dbReference type="EMBL" id="AF231916">
    <property type="protein sequence ID" value="AAF40199.1"/>
    <property type="molecule type" value="mRNA"/>
</dbReference>
<dbReference type="EMBL" id="AL121739">
    <property type="protein sequence ID" value="CAB57329.1"/>
    <property type="molecule type" value="mRNA"/>
</dbReference>
<dbReference type="EMBL" id="AB024079">
    <property type="protein sequence ID" value="BAA82872.1"/>
    <property type="molecule type" value="mRNA"/>
</dbReference>
<dbReference type="EMBL" id="AL021879">
    <property type="status" value="NOT_ANNOTATED_CDS"/>
    <property type="molecule type" value="Genomic_DNA"/>
</dbReference>
<dbReference type="EMBL" id="BC113665">
    <property type="protein sequence ID" value="AAI13666.1"/>
    <property type="molecule type" value="mRNA"/>
</dbReference>
<dbReference type="EMBL" id="BC113667">
    <property type="protein sequence ID" value="AAI13668.1"/>
    <property type="molecule type" value="mRNA"/>
</dbReference>
<dbReference type="CCDS" id="CCDS13100.1"/>
<dbReference type="RefSeq" id="NP_060015.1">
    <property type="nucleotide sequence ID" value="NM_017545.3"/>
</dbReference>
<dbReference type="PDB" id="2NZL">
    <property type="method" value="X-ray"/>
    <property type="resolution" value="1.35 A"/>
    <property type="chains" value="A=1-370"/>
</dbReference>
<dbReference type="PDB" id="2RDT">
    <property type="method" value="X-ray"/>
    <property type="resolution" value="1.95 A"/>
    <property type="chains" value="A=1-370"/>
</dbReference>
<dbReference type="PDB" id="2RDU">
    <property type="method" value="X-ray"/>
    <property type="resolution" value="1.65 A"/>
    <property type="chains" value="A=1-370"/>
</dbReference>
<dbReference type="PDB" id="2RDW">
    <property type="method" value="X-ray"/>
    <property type="resolution" value="1.95 A"/>
    <property type="chains" value="A=1-370"/>
</dbReference>
<dbReference type="PDB" id="2W0U">
    <property type="method" value="X-ray"/>
    <property type="resolution" value="2.84 A"/>
    <property type="chains" value="A/B/C/D=1-370"/>
</dbReference>
<dbReference type="PDB" id="5QIB">
    <property type="method" value="X-ray"/>
    <property type="resolution" value="1.48 A"/>
    <property type="chains" value="A=1-368"/>
</dbReference>
<dbReference type="PDB" id="5QIC">
    <property type="method" value="X-ray"/>
    <property type="resolution" value="1.34 A"/>
    <property type="chains" value="A=1-368"/>
</dbReference>
<dbReference type="PDB" id="5QID">
    <property type="method" value="X-ray"/>
    <property type="resolution" value="1.45 A"/>
    <property type="chains" value="A=1-368"/>
</dbReference>
<dbReference type="PDB" id="5QIE">
    <property type="method" value="X-ray"/>
    <property type="resolution" value="1.34 A"/>
    <property type="chains" value="A=1-368"/>
</dbReference>
<dbReference type="PDB" id="5QIF">
    <property type="method" value="X-ray"/>
    <property type="resolution" value="1.20 A"/>
    <property type="chains" value="A=1-368"/>
</dbReference>
<dbReference type="PDB" id="5QIG">
    <property type="method" value="X-ray"/>
    <property type="resolution" value="1.42 A"/>
    <property type="chains" value="A=1-368"/>
</dbReference>
<dbReference type="PDB" id="5QIH">
    <property type="method" value="X-ray"/>
    <property type="resolution" value="1.33 A"/>
    <property type="chains" value="A=1-368"/>
</dbReference>
<dbReference type="PDB" id="6GMB">
    <property type="method" value="X-ray"/>
    <property type="resolution" value="1.35 A"/>
    <property type="chains" value="A=1-362"/>
</dbReference>
<dbReference type="PDB" id="6GMC">
    <property type="method" value="X-ray"/>
    <property type="resolution" value="1.20 A"/>
    <property type="chains" value="A=1-362"/>
</dbReference>
<dbReference type="PDB" id="6W44">
    <property type="method" value="X-ray"/>
    <property type="resolution" value="1.64 A"/>
    <property type="chains" value="A=1-368"/>
</dbReference>
<dbReference type="PDB" id="6W45">
    <property type="method" value="X-ray"/>
    <property type="resolution" value="1.70 A"/>
    <property type="chains" value="A=1-368"/>
</dbReference>
<dbReference type="PDB" id="6W4C">
    <property type="method" value="X-ray"/>
    <property type="resolution" value="1.75 A"/>
    <property type="chains" value="A=1-368"/>
</dbReference>
<dbReference type="PDB" id="7M2O">
    <property type="method" value="X-ray"/>
    <property type="resolution" value="2.07 A"/>
    <property type="chains" value="A=1-370"/>
</dbReference>
<dbReference type="PDB" id="7R4N">
    <property type="method" value="X-ray"/>
    <property type="resolution" value="1.70 A"/>
    <property type="chains" value="A=1-362"/>
</dbReference>
<dbReference type="PDB" id="7R4O">
    <property type="method" value="X-ray"/>
    <property type="resolution" value="1.50 A"/>
    <property type="chains" value="A=1-362"/>
</dbReference>
<dbReference type="PDB" id="7R4P">
    <property type="method" value="X-ray"/>
    <property type="resolution" value="1.37 A"/>
    <property type="chains" value="A=1-362"/>
</dbReference>
<dbReference type="PDBsum" id="2NZL"/>
<dbReference type="PDBsum" id="2RDT"/>
<dbReference type="PDBsum" id="2RDU"/>
<dbReference type="PDBsum" id="2RDW"/>
<dbReference type="PDBsum" id="2W0U"/>
<dbReference type="PDBsum" id="5QIB"/>
<dbReference type="PDBsum" id="5QIC"/>
<dbReference type="PDBsum" id="5QID"/>
<dbReference type="PDBsum" id="5QIE"/>
<dbReference type="PDBsum" id="5QIF"/>
<dbReference type="PDBsum" id="5QIG"/>
<dbReference type="PDBsum" id="5QIH"/>
<dbReference type="PDBsum" id="6GMB"/>
<dbReference type="PDBsum" id="6GMC"/>
<dbReference type="PDBsum" id="6W44"/>
<dbReference type="PDBsum" id="6W45"/>
<dbReference type="PDBsum" id="6W4C"/>
<dbReference type="PDBsum" id="7M2O"/>
<dbReference type="PDBsum" id="7R4N"/>
<dbReference type="PDBsum" id="7R4O"/>
<dbReference type="PDBsum" id="7R4P"/>
<dbReference type="SMR" id="Q9UJM8"/>
<dbReference type="BioGRID" id="119941">
    <property type="interactions" value="7"/>
</dbReference>
<dbReference type="FunCoup" id="Q9UJM8">
    <property type="interactions" value="765"/>
</dbReference>
<dbReference type="IntAct" id="Q9UJM8">
    <property type="interactions" value="3"/>
</dbReference>
<dbReference type="STRING" id="9606.ENSP00000368066"/>
<dbReference type="BindingDB" id="Q9UJM8"/>
<dbReference type="ChEMBL" id="CHEMBL4229"/>
<dbReference type="DrugBank" id="DB07907">
    <property type="generic name" value="(2S)-2-HYDROXYOCTANOIC ACID"/>
</dbReference>
<dbReference type="DrugBank" id="DB07060">
    <property type="generic name" value="3-(INDOL-3-YL) LACTATE"/>
</dbReference>
<dbReference type="DrugBank" id="DB03064">
    <property type="generic name" value="3-Decyl-2,5-Dioxo-4-Hydroxy-3-Pyrroline"/>
</dbReference>
<dbReference type="DrugBank" id="DB04374">
    <property type="generic name" value="4-Carboxy-5-(1-Pentyl)Hexylsulfanyl-1,2,3-Triazole"/>
</dbReference>
<dbReference type="DrugBank" id="DB06979">
    <property type="generic name" value="5-(dodecylthio)-1H-1,2,3-triazole-4-carboxylic acid"/>
</dbReference>
<dbReference type="DrugBank" id="DB02279">
    <property type="generic name" value="Benzoylformic Acid"/>
</dbReference>
<dbReference type="DrugBank" id="DB03247">
    <property type="generic name" value="Flavin mononucleotide"/>
</dbReference>
<dbReference type="DrugBank" id="DB15935">
    <property type="generic name" value="Lumasiran"/>
</dbReference>
<dbReference type="DrugBank" id="DB02164">
    <property type="generic name" value="N-sulfo-flavin mononucleotide"/>
</dbReference>
<dbReference type="DrugBank" id="DB03884">
    <property type="generic name" value="Phenylpyruvic acid"/>
</dbReference>
<dbReference type="DrugCentral" id="Q9UJM8"/>
<dbReference type="iPTMnet" id="Q9UJM8"/>
<dbReference type="PhosphoSitePlus" id="Q9UJM8"/>
<dbReference type="BioMuta" id="HAO1"/>
<dbReference type="DMDM" id="13124294"/>
<dbReference type="MassIVE" id="Q9UJM8"/>
<dbReference type="PaxDb" id="9606-ENSP00000368066"/>
<dbReference type="PeptideAtlas" id="Q9UJM8"/>
<dbReference type="ProteomicsDB" id="84633"/>
<dbReference type="Antibodypedia" id="8448">
    <property type="antibodies" value="417 antibodies from 32 providers"/>
</dbReference>
<dbReference type="DNASU" id="54363"/>
<dbReference type="Ensembl" id="ENST00000378789.4">
    <property type="protein sequence ID" value="ENSP00000368066.3"/>
    <property type="gene ID" value="ENSG00000101323.5"/>
</dbReference>
<dbReference type="GeneID" id="54363"/>
<dbReference type="KEGG" id="hsa:54363"/>
<dbReference type="MANE-Select" id="ENST00000378789.4">
    <property type="protein sequence ID" value="ENSP00000368066.3"/>
    <property type="RefSeq nucleotide sequence ID" value="NM_017545.3"/>
    <property type="RefSeq protein sequence ID" value="NP_060015.1"/>
</dbReference>
<dbReference type="UCSC" id="uc002wmw.2">
    <property type="organism name" value="human"/>
</dbReference>
<dbReference type="AGR" id="HGNC:4809"/>
<dbReference type="CTD" id="54363"/>
<dbReference type="DisGeNET" id="54363"/>
<dbReference type="GeneCards" id="HAO1"/>
<dbReference type="HGNC" id="HGNC:4809">
    <property type="gene designation" value="HAO1"/>
</dbReference>
<dbReference type="HPA" id="ENSG00000101323">
    <property type="expression patterns" value="Tissue enriched (liver)"/>
</dbReference>
<dbReference type="MalaCards" id="HAO1"/>
<dbReference type="MIM" id="605023">
    <property type="type" value="gene"/>
</dbReference>
<dbReference type="neXtProt" id="NX_Q9UJM8"/>
<dbReference type="OpenTargets" id="ENSG00000101323"/>
<dbReference type="PharmGKB" id="PA29185"/>
<dbReference type="VEuPathDB" id="HostDB:ENSG00000101323"/>
<dbReference type="eggNOG" id="KOG0538">
    <property type="taxonomic scope" value="Eukaryota"/>
</dbReference>
<dbReference type="GeneTree" id="ENSGT00390000018717"/>
<dbReference type="HOGENOM" id="CLU_020639_6_1_1"/>
<dbReference type="InParanoid" id="Q9UJM8"/>
<dbReference type="OMA" id="RIWFRPK"/>
<dbReference type="OrthoDB" id="25826at2759"/>
<dbReference type="PAN-GO" id="Q9UJM8">
    <property type="GO annotations" value="2 GO annotations based on evolutionary models"/>
</dbReference>
<dbReference type="PhylomeDB" id="Q9UJM8"/>
<dbReference type="TreeFam" id="TF313363"/>
<dbReference type="BRENDA" id="1.1.3.15">
    <property type="organism ID" value="2681"/>
</dbReference>
<dbReference type="PathwayCommons" id="Q9UJM8"/>
<dbReference type="Reactome" id="R-HSA-389661">
    <property type="pathway name" value="Glyoxylate metabolism and glycine degradation"/>
</dbReference>
<dbReference type="Reactome" id="R-HSA-9033241">
    <property type="pathway name" value="Peroxisomal protein import"/>
</dbReference>
<dbReference type="SABIO-RK" id="Q9UJM8"/>
<dbReference type="SignaLink" id="Q9UJM8"/>
<dbReference type="UniPathway" id="UPA00288"/>
<dbReference type="BioGRID-ORCS" id="54363">
    <property type="hits" value="10 hits in 1149 CRISPR screens"/>
</dbReference>
<dbReference type="EvolutionaryTrace" id="Q9UJM8"/>
<dbReference type="GenomeRNAi" id="54363"/>
<dbReference type="Pharos" id="Q9UJM8">
    <property type="development level" value="Tclin"/>
</dbReference>
<dbReference type="PRO" id="PR:Q9UJM8"/>
<dbReference type="Proteomes" id="UP000005640">
    <property type="component" value="Chromosome 20"/>
</dbReference>
<dbReference type="RNAct" id="Q9UJM8">
    <property type="molecule type" value="protein"/>
</dbReference>
<dbReference type="Bgee" id="ENSG00000101323">
    <property type="expression patterns" value="Expressed in right lobe of liver and 27 other cell types or tissues"/>
</dbReference>
<dbReference type="ExpressionAtlas" id="Q9UJM8">
    <property type="expression patterns" value="baseline and differential"/>
</dbReference>
<dbReference type="GO" id="GO:0005829">
    <property type="term" value="C:cytosol"/>
    <property type="evidence" value="ECO:0000304"/>
    <property type="project" value="Reactome"/>
</dbReference>
<dbReference type="GO" id="GO:0043231">
    <property type="term" value="C:intracellular membrane-bounded organelle"/>
    <property type="evidence" value="ECO:0000314"/>
    <property type="project" value="HPA"/>
</dbReference>
<dbReference type="GO" id="GO:0005782">
    <property type="term" value="C:peroxisomal matrix"/>
    <property type="evidence" value="ECO:0000314"/>
    <property type="project" value="UniProtKB"/>
</dbReference>
<dbReference type="GO" id="GO:0003973">
    <property type="term" value="F:(S)-2-hydroxy-acid oxidase activity"/>
    <property type="evidence" value="ECO:0000314"/>
    <property type="project" value="UniProtKB"/>
</dbReference>
<dbReference type="GO" id="GO:0010181">
    <property type="term" value="F:FMN binding"/>
    <property type="evidence" value="ECO:0000314"/>
    <property type="project" value="UniProtKB"/>
</dbReference>
<dbReference type="GO" id="GO:0047969">
    <property type="term" value="F:glyoxylate oxidase activity"/>
    <property type="evidence" value="ECO:0000314"/>
    <property type="project" value="UniProtKB"/>
</dbReference>
<dbReference type="GO" id="GO:0001561">
    <property type="term" value="P:fatty acid alpha-oxidation"/>
    <property type="evidence" value="ECO:0000314"/>
    <property type="project" value="UniProtKB"/>
</dbReference>
<dbReference type="GO" id="GO:0006545">
    <property type="term" value="P:glycine biosynthetic process"/>
    <property type="evidence" value="ECO:0007669"/>
    <property type="project" value="UniProtKB-UniPathway"/>
</dbReference>
<dbReference type="GO" id="GO:0046296">
    <property type="term" value="P:glycolate catabolic process"/>
    <property type="evidence" value="ECO:0000314"/>
    <property type="project" value="UniProtKB"/>
</dbReference>
<dbReference type="GO" id="GO:0006979">
    <property type="term" value="P:response to oxidative stress"/>
    <property type="evidence" value="ECO:0007669"/>
    <property type="project" value="Ensembl"/>
</dbReference>
<dbReference type="CDD" id="cd02809">
    <property type="entry name" value="alpha_hydroxyacid_oxid_FMN"/>
    <property type="match status" value="1"/>
</dbReference>
<dbReference type="FunFam" id="3.20.20.70:FF:000056">
    <property type="entry name" value="hydroxyacid oxidase 2"/>
    <property type="match status" value="1"/>
</dbReference>
<dbReference type="Gene3D" id="3.20.20.70">
    <property type="entry name" value="Aldolase class I"/>
    <property type="match status" value="1"/>
</dbReference>
<dbReference type="InterPro" id="IPR013785">
    <property type="entry name" value="Aldolase_TIM"/>
</dbReference>
<dbReference type="InterPro" id="IPR012133">
    <property type="entry name" value="Alpha-hydoxy_acid_DH_FMN"/>
</dbReference>
<dbReference type="InterPro" id="IPR000262">
    <property type="entry name" value="FMN-dep_DH"/>
</dbReference>
<dbReference type="InterPro" id="IPR037396">
    <property type="entry name" value="FMN_HAD"/>
</dbReference>
<dbReference type="InterPro" id="IPR008259">
    <property type="entry name" value="FMN_hydac_DH_AS"/>
</dbReference>
<dbReference type="PANTHER" id="PTHR10578:SF107">
    <property type="entry name" value="2-HYDROXYACID OXIDASE 1"/>
    <property type="match status" value="1"/>
</dbReference>
<dbReference type="PANTHER" id="PTHR10578">
    <property type="entry name" value="S -2-HYDROXY-ACID OXIDASE-RELATED"/>
    <property type="match status" value="1"/>
</dbReference>
<dbReference type="Pfam" id="PF01070">
    <property type="entry name" value="FMN_dh"/>
    <property type="match status" value="1"/>
</dbReference>
<dbReference type="PIRSF" id="PIRSF000138">
    <property type="entry name" value="Al-hdrx_acd_dh"/>
    <property type="match status" value="1"/>
</dbReference>
<dbReference type="SUPFAM" id="SSF51395">
    <property type="entry name" value="FMN-linked oxidoreductases"/>
    <property type="match status" value="1"/>
</dbReference>
<dbReference type="PROSITE" id="PS00557">
    <property type="entry name" value="FMN_HYDROXY_ACID_DH_1"/>
    <property type="match status" value="1"/>
</dbReference>
<dbReference type="PROSITE" id="PS51349">
    <property type="entry name" value="FMN_HYDROXY_ACID_DH_2"/>
    <property type="match status" value="1"/>
</dbReference>
<feature type="chain" id="PRO_0000206318" description="2-Hydroxyacid oxidase 1">
    <location>
        <begin position="1"/>
        <end position="370"/>
    </location>
</feature>
<feature type="domain" description="FMN hydroxy acid dehydrogenase" evidence="3">
    <location>
        <begin position="1"/>
        <end position="365"/>
    </location>
</feature>
<feature type="short sequence motif" description="Microbody targeting signal" evidence="2">
    <location>
        <begin position="368"/>
        <end position="370"/>
    </location>
</feature>
<feature type="active site" description="Proton acceptor" evidence="3">
    <location>
        <position position="260"/>
    </location>
</feature>
<feature type="binding site" evidence="7 19 21">
    <location>
        <position position="26"/>
    </location>
    <ligand>
        <name>glyoxylate</name>
        <dbReference type="ChEBI" id="CHEBI:36655"/>
    </ligand>
</feature>
<feature type="binding site" evidence="7 8 20 21 22 23">
    <location>
        <begin position="79"/>
        <end position="81"/>
    </location>
    <ligand>
        <name>FMN</name>
        <dbReference type="ChEBI" id="CHEBI:58210"/>
    </ligand>
</feature>
<feature type="binding site" evidence="3 7 8 9 19 20 21 22 23">
    <location>
        <position position="108"/>
    </location>
    <ligand>
        <name>FMN</name>
        <dbReference type="ChEBI" id="CHEBI:58210"/>
    </ligand>
</feature>
<feature type="binding site" evidence="3 7 8 20 21 23">
    <location>
        <position position="130"/>
    </location>
    <ligand>
        <name>FMN</name>
        <dbReference type="ChEBI" id="CHEBI:58210"/>
    </ligand>
</feature>
<feature type="binding site" evidence="7 19 21">
    <location>
        <position position="132"/>
    </location>
    <ligand>
        <name>glyoxylate</name>
        <dbReference type="ChEBI" id="CHEBI:36655"/>
    </ligand>
</feature>
<feature type="binding site" evidence="3 7 8 9 19 20 21 22 23">
    <location>
        <position position="158"/>
    </location>
    <ligand>
        <name>FMN</name>
        <dbReference type="ChEBI" id="CHEBI:58210"/>
    </ligand>
</feature>
<feature type="binding site" evidence="7 9 19 21">
    <location>
        <position position="167"/>
    </location>
    <ligand>
        <name>glyoxylate</name>
        <dbReference type="ChEBI" id="CHEBI:36655"/>
    </ligand>
</feature>
<feature type="binding site" evidence="3 7 8 9 19 20 21 22 23">
    <location>
        <position position="236"/>
    </location>
    <ligand>
        <name>FMN</name>
        <dbReference type="ChEBI" id="CHEBI:58210"/>
    </ligand>
</feature>
<feature type="binding site" evidence="7 8 9 19 20 21 22 23">
    <location>
        <position position="258"/>
    </location>
    <ligand>
        <name>FMN</name>
        <dbReference type="ChEBI" id="CHEBI:58210"/>
    </ligand>
</feature>
<feature type="binding site" evidence="7 19 21">
    <location>
        <position position="260"/>
    </location>
    <ligand>
        <name>glyoxylate</name>
        <dbReference type="ChEBI" id="CHEBI:36655"/>
    </ligand>
</feature>
<feature type="binding site" evidence="7 19 21">
    <location>
        <position position="263"/>
    </location>
    <ligand>
        <name>glyoxylate</name>
        <dbReference type="ChEBI" id="CHEBI:36655"/>
    </ligand>
</feature>
<feature type="binding site" evidence="7 8 9 19 20 21 22 23">
    <location>
        <begin position="291"/>
        <end position="295"/>
    </location>
    <ligand>
        <name>FMN</name>
        <dbReference type="ChEBI" id="CHEBI:58210"/>
    </ligand>
</feature>
<feature type="binding site" evidence="7 8 9 19 20 21 22 23">
    <location>
        <begin position="314"/>
        <end position="315"/>
    </location>
    <ligand>
        <name>FMN</name>
        <dbReference type="ChEBI" id="CHEBI:58210"/>
    </ligand>
</feature>
<feature type="modified residue" description="N6-succinyllysine" evidence="1">
    <location>
        <position position="184"/>
    </location>
</feature>
<feature type="modified residue" description="Phosphoserine" evidence="1">
    <location>
        <position position="194"/>
    </location>
</feature>
<feature type="modified residue" description="Phosphoserine" evidence="24">
    <location>
        <position position="230"/>
    </location>
</feature>
<feature type="helix" evidence="25">
    <location>
        <begin position="8"/>
        <end position="18"/>
    </location>
</feature>
<feature type="helix" evidence="25">
    <location>
        <begin position="21"/>
        <end position="28"/>
    </location>
</feature>
<feature type="helix" evidence="25">
    <location>
        <begin position="35"/>
        <end position="46"/>
    </location>
</feature>
<feature type="strand" evidence="25">
    <location>
        <begin position="47"/>
        <end position="49"/>
    </location>
</feature>
<feature type="strand" evidence="28">
    <location>
        <begin position="53"/>
        <end position="55"/>
    </location>
</feature>
<feature type="strand" evidence="25">
    <location>
        <begin position="64"/>
        <end position="66"/>
    </location>
</feature>
<feature type="strand" evidence="25">
    <location>
        <begin position="69"/>
        <end position="77"/>
    </location>
</feature>
<feature type="helix" evidence="25">
    <location>
        <begin position="83"/>
        <end position="85"/>
    </location>
</feature>
<feature type="helix" evidence="25">
    <location>
        <begin position="90"/>
        <end position="101"/>
    </location>
</feature>
<feature type="strand" evidence="25">
    <location>
        <begin position="104"/>
        <end position="107"/>
    </location>
</feature>
<feature type="helix" evidence="25">
    <location>
        <begin position="115"/>
        <end position="121"/>
    </location>
</feature>
<feature type="strand" evidence="25">
    <location>
        <begin position="125"/>
        <end position="131"/>
    </location>
</feature>
<feature type="strand" evidence="26">
    <location>
        <begin position="134"/>
        <end position="136"/>
    </location>
</feature>
<feature type="helix" evidence="25">
    <location>
        <begin position="137"/>
        <end position="149"/>
    </location>
</feature>
<feature type="strand" evidence="25">
    <location>
        <begin position="155"/>
        <end position="158"/>
    </location>
</feature>
<feature type="helix" evidence="25">
    <location>
        <begin position="168"/>
        <end position="172"/>
    </location>
</feature>
<feature type="turn" evidence="25">
    <location>
        <begin position="189"/>
        <end position="193"/>
    </location>
</feature>
<feature type="helix" evidence="25">
    <location>
        <begin position="204"/>
        <end position="212"/>
    </location>
</feature>
<feature type="helix" evidence="25">
    <location>
        <begin position="219"/>
        <end position="228"/>
    </location>
</feature>
<feature type="strand" evidence="25">
    <location>
        <begin position="233"/>
        <end position="238"/>
    </location>
</feature>
<feature type="helix" evidence="25">
    <location>
        <begin position="241"/>
        <end position="249"/>
    </location>
</feature>
<feature type="strand" evidence="25">
    <location>
        <begin position="254"/>
        <end position="257"/>
    </location>
</feature>
<feature type="helix" evidence="25">
    <location>
        <begin position="260"/>
        <end position="262"/>
    </location>
</feature>
<feature type="helix" evidence="25">
    <location>
        <begin position="271"/>
        <end position="282"/>
    </location>
</feature>
<feature type="strand" evidence="25">
    <location>
        <begin position="285"/>
        <end position="293"/>
    </location>
</feature>
<feature type="helix" evidence="25">
    <location>
        <begin position="297"/>
        <end position="305"/>
    </location>
</feature>
<feature type="strand" evidence="25">
    <location>
        <begin position="309"/>
        <end position="314"/>
    </location>
</feature>
<feature type="helix" evidence="25">
    <location>
        <begin position="315"/>
        <end position="347"/>
    </location>
</feature>
<feature type="helix" evidence="25">
    <location>
        <begin position="352"/>
        <end position="354"/>
    </location>
</feature>
<feature type="helix" evidence="25">
    <location>
        <begin position="357"/>
        <end position="359"/>
    </location>
</feature>
<feature type="strand" evidence="27">
    <location>
        <begin position="360"/>
        <end position="362"/>
    </location>
</feature>
<comment type="function">
    <text evidence="4 5 6 7 11 12">Broad substrate specificity (S)-2-hydroxy-acid oxidase that preferentially oxidizes glycolate (PubMed:10777549, PubMed:10978532, PubMed:17669354, PubMed:18215067). The glyoxylate produced by the oxidation of glycolate can then be utilized by alanine-glyoxylate aminotransferase for the peroxisomal synthesis of glycine; this pathway appears to be an important step for the detoxification of glyoxylate which, if allowed to accumulate, may be metabolized to oxalate with formation of kidney stones (PubMed:10978532, PubMed:17669354). Can also catalyze the oxidation of glyoxylate, and long chain hydroxyacids such as 2-hydroxyhexadecanoate and 2-hydroxyoctanoate, albeit with much lower catalytic efficiency (PubMed:10777549, PubMed:17669354, PubMed:18215067). Active in vitro with the artificial electron acceptor 2,6-dichlorophenolindophenol (DCIP), but O2 is believed to be the physiological electron acceptor, leading to the production of H2O2 (PubMed:10777549, PubMed:10978532, PubMed:17669354, PubMed:18215067). Is not active on L-lactate and 2-hydroxybutanoate (PubMed:10777549).</text>
</comment>
<comment type="catalytic activity">
    <reaction evidence="14 16 17">
        <text>a (2S)-2-hydroxycarboxylate + O2 = a 2-oxocarboxylate + H2O2</text>
        <dbReference type="Rhea" id="RHEA:16789"/>
        <dbReference type="ChEBI" id="CHEBI:15379"/>
        <dbReference type="ChEBI" id="CHEBI:16240"/>
        <dbReference type="ChEBI" id="CHEBI:35179"/>
        <dbReference type="ChEBI" id="CHEBI:58123"/>
        <dbReference type="EC" id="1.1.3.15"/>
    </reaction>
    <physiologicalReaction direction="left-to-right" evidence="14">
        <dbReference type="Rhea" id="RHEA:16790"/>
    </physiologicalReaction>
</comment>
<comment type="catalytic activity">
    <reaction evidence="14 15 16 17">
        <text>glycolate + O2 = glyoxylate + H2O2</text>
        <dbReference type="Rhea" id="RHEA:25311"/>
        <dbReference type="ChEBI" id="CHEBI:15379"/>
        <dbReference type="ChEBI" id="CHEBI:16240"/>
        <dbReference type="ChEBI" id="CHEBI:29805"/>
        <dbReference type="ChEBI" id="CHEBI:36655"/>
        <dbReference type="EC" id="1.1.3.15"/>
    </reaction>
    <physiologicalReaction direction="left-to-right" evidence="15 16">
        <dbReference type="Rhea" id="RHEA:25312"/>
    </physiologicalReaction>
</comment>
<comment type="catalytic activity">
    <reaction evidence="14 16 17">
        <text>glyoxylate + O2 + H2O = oxalate + H2O2 + H(+)</text>
        <dbReference type="Rhea" id="RHEA:14837"/>
        <dbReference type="ChEBI" id="CHEBI:15377"/>
        <dbReference type="ChEBI" id="CHEBI:15378"/>
        <dbReference type="ChEBI" id="CHEBI:15379"/>
        <dbReference type="ChEBI" id="CHEBI:16240"/>
        <dbReference type="ChEBI" id="CHEBI:30623"/>
        <dbReference type="ChEBI" id="CHEBI:36655"/>
        <dbReference type="EC" id="1.2.3.5"/>
    </reaction>
    <physiologicalReaction direction="left-to-right" evidence="16">
        <dbReference type="Rhea" id="RHEA:14838"/>
    </physiologicalReaction>
</comment>
<comment type="catalytic activity">
    <reaction evidence="14 17">
        <text>2-hydroxyhexadecanoate + O2 = 2-oxohexadecanoate + H2O2</text>
        <dbReference type="Rhea" id="RHEA:67944"/>
        <dbReference type="ChEBI" id="CHEBI:15379"/>
        <dbReference type="ChEBI" id="CHEBI:16240"/>
        <dbReference type="ChEBI" id="CHEBI:65097"/>
        <dbReference type="ChEBI" id="CHEBI:176593"/>
    </reaction>
    <physiologicalReaction direction="left-to-right" evidence="14">
        <dbReference type="Rhea" id="RHEA:67945"/>
    </physiologicalReaction>
</comment>
<comment type="catalytic activity">
    <reaction evidence="14 17">
        <text>2-hydroxyoctanoate + O2 = 2-oxooctanoate + H2O2</text>
        <dbReference type="Rhea" id="RHEA:67940"/>
        <dbReference type="ChEBI" id="CHEBI:15379"/>
        <dbReference type="ChEBI" id="CHEBI:16240"/>
        <dbReference type="ChEBI" id="CHEBI:133514"/>
        <dbReference type="ChEBI" id="CHEBI:176689"/>
    </reaction>
    <physiologicalReaction direction="left-to-right" evidence="14">
        <dbReference type="Rhea" id="RHEA:67941"/>
    </physiologicalReaction>
</comment>
<comment type="cofactor">
    <cofactor evidence="6 7">
        <name>FMN</name>
        <dbReference type="ChEBI" id="CHEBI:58210"/>
    </cofactor>
</comment>
<comment type="activity regulation">
    <text evidence="6">Inhibited by its product oxalate (PubMed:17669354). Inhibited by high concentrations of dichlorophenolindophenol (DCIP) in vitro (PubMed:17669354).</text>
</comment>
<comment type="biophysicochemical properties">
    <kinetics>
        <KM evidence="4">120 uM for glycolate (at pH 7.5, with DCIP as electron acceptor)</KM>
        <KM evidence="7">141 uM for glycolate (at pH 7.5 and 37 degrees Celsius, with DCIP as electron acceptor)</KM>
        <KM evidence="6">56 uM for glycolate (at pH 7.0 and 37 degrees Celsius, with DCIP as electron acceptor)</KM>
        <KM evidence="7">40 uM for 2-hydroxy octanoate (at pH 7.5 and 37 degrees Celsius, with DCIP as electron acceptor)</KM>
        <KM evidence="7">2200 uM for glyoxylate (at pH 7.5 and 37 degrees Celsius, with DCIP as electron acceptor)</KM>
        <KM evidence="6">3400 uM for glyoxylate (at pH 7.0 and 37 degrees Celsius, with DCIP as electron acceptor)</KM>
        <KM evidence="6">16.5 mM for L-lactate (at pH 7.0 and 37 degrees Celsius, with DCIP as electron acceptor)</KM>
        <KM evidence="6">1.5 mM for L-mandelate (at pH 7.0 and 37 degrees Celsius, with DCIP as electron acceptor)</KM>
        <text evidence="6 7">kcat is 3.6 sec(-1) for the oxidation of glycolate with DCIP as electron acceptor (at pH 7.0 and 37 degrees Celsius) (PubMed:17669354). kcat is 4.1 sec(-1) for the oxidation of glycolate with DCIP as electron acceptor (at pH 7.5 and 37 degrees Celsius) (PubMed:18215067). kcat is 0.7 sec(-1) for the oxidation of glyoxylate with DCIP as electron acceptor (at pH 7.5 and 37 degrees Celsius) (PubMed:18215067). kcat is 0.83 sec(-1) for the oxidation of glyoxylate with DCIP as electron acceptor (at pH 7.0 and 37 degrees Celsius) (PubMed:17669354). kcat is 0.46 sec(-1) for the oxidation of L-lactate with DCIP as electron acceptor (at pH 7.0 and 37 degrees Celsius) (PubMed:17669354). kcat is 0.11 sec(-1) for the oxidation of L-mandelate with DCIP as electron acceptor (at pH 7.0 and 37 degrees Celsius) (PubMed:17669354). Shows a higher catalytic efficiency for glycolate compared to glyoxylate (PubMed:17669354, PubMed:18215067).</text>
    </kinetics>
</comment>
<comment type="pathway">
    <text evidence="11">Amino-acid biosynthesis; glycine biosynthesis.</text>
</comment>
<comment type="subunit">
    <text evidence="6">Homotetramer.</text>
</comment>
<comment type="subcellular location">
    <subcellularLocation>
        <location evidence="4">Peroxisome matrix</location>
    </subcellularLocation>
</comment>
<comment type="tissue specificity">
    <text evidence="4 5">Highly expressed in liver.</text>
</comment>
<comment type="similarity">
    <text evidence="3">Belongs to the FMN-dependent alpha-hydroxy acid dehydrogenase family.</text>
</comment>
<accession>Q9UJM8</accession>
<accession>Q14CQ0</accession>
<accession>Q9UPZ0</accession>
<accession>Q9Y3I7</accession>
<gene>
    <name evidence="11 18" type="primary">HAO1</name>
    <name evidence="18" type="synonym">GOX1</name>
</gene>
<keyword id="KW-0002">3D-structure</keyword>
<keyword id="KW-0028">Amino-acid biosynthesis</keyword>
<keyword id="KW-0285">Flavoprotein</keyword>
<keyword id="KW-0288">FMN</keyword>
<keyword id="KW-0560">Oxidoreductase</keyword>
<keyword id="KW-0576">Peroxisome</keyword>
<keyword id="KW-0597">Phosphoprotein</keyword>
<keyword id="KW-1267">Proteomics identification</keyword>
<keyword id="KW-1185">Reference proteome</keyword>
<reference key="1">
    <citation type="journal article" date="2000" name="Biochim. Biophys. Acta">
        <title>Identification and expression of a cDNA for human glycolate oxidase.</title>
        <authorList>
            <person name="Williams E.L."/>
            <person name="Cregeen D.P."/>
            <person name="Rumsby G."/>
        </authorList>
    </citation>
    <scope>NUCLEOTIDE SEQUENCE [MRNA]</scope>
    <scope>FUNCTION</scope>
    <scope>CATALYTIC ACTIVITY</scope>
    <scope>TISSUE SPECIFICITY</scope>
    <scope>PATHWAY</scope>
    <source>
        <tissue>Liver</tissue>
    </source>
</reference>
<reference key="2">
    <citation type="journal article" date="2000" name="J. Biol. Chem.">
        <title>Identification and characterization of HAOX1, HAOX2, and HAOX3, three human peroxisomal 2-hydroxy acid oxidases.</title>
        <authorList>
            <person name="Jones J.M."/>
            <person name="Morrell J.C."/>
            <person name="Gould S.J."/>
        </authorList>
    </citation>
    <scope>NUCLEOTIDE SEQUENCE [MRNA]</scope>
    <scope>FUNCTION</scope>
    <scope>CATALYTIC ACTIVITY</scope>
    <scope>SUBSTRATE SPECIFICITY</scope>
    <scope>BIOPHYSICOCHEMICAL PROPERTIES</scope>
    <scope>SUBCELLULAR LOCATION</scope>
    <scope>TOPOLOGY</scope>
    <scope>TISSUE SPECIFICITY</scope>
</reference>
<reference key="3">
    <citation type="submission" date="1999-10" db="EMBL/GenBank/DDBJ databases">
        <authorList>
            <person name="Stavrides G.S."/>
            <person name="Huckle E.J."/>
            <person name="Deloukas P."/>
        </authorList>
    </citation>
    <scope>NUCLEOTIDE SEQUENCE [MRNA]</scope>
</reference>
<reference key="4">
    <citation type="submission" date="1999-02" db="EMBL/GenBank/DDBJ databases">
        <title>Isolation and characterization of a novel human liver-specific gene homologous to the plant glycolate oxidase by the differential display method.</title>
        <authorList>
            <person name="Watanabe T."/>
        </authorList>
    </citation>
    <scope>NUCLEOTIDE SEQUENCE [MRNA]</scope>
</reference>
<reference key="5">
    <citation type="journal article" date="2001" name="Nature">
        <title>The DNA sequence and comparative analysis of human chromosome 20.</title>
        <authorList>
            <person name="Deloukas P."/>
            <person name="Matthews L.H."/>
            <person name="Ashurst J.L."/>
            <person name="Burton J."/>
            <person name="Gilbert J.G.R."/>
            <person name="Jones M."/>
            <person name="Stavrides G."/>
            <person name="Almeida J.P."/>
            <person name="Babbage A.K."/>
            <person name="Bagguley C.L."/>
            <person name="Bailey J."/>
            <person name="Barlow K.F."/>
            <person name="Bates K.N."/>
            <person name="Beard L.M."/>
            <person name="Beare D.M."/>
            <person name="Beasley O.P."/>
            <person name="Bird C.P."/>
            <person name="Blakey S.E."/>
            <person name="Bridgeman A.M."/>
            <person name="Brown A.J."/>
            <person name="Buck D."/>
            <person name="Burrill W.D."/>
            <person name="Butler A.P."/>
            <person name="Carder C."/>
            <person name="Carter N.P."/>
            <person name="Chapman J.C."/>
            <person name="Clamp M."/>
            <person name="Clark G."/>
            <person name="Clark L.N."/>
            <person name="Clark S.Y."/>
            <person name="Clee C.M."/>
            <person name="Clegg S."/>
            <person name="Cobley V.E."/>
            <person name="Collier R.E."/>
            <person name="Connor R.E."/>
            <person name="Corby N.R."/>
            <person name="Coulson A."/>
            <person name="Coville G.J."/>
            <person name="Deadman R."/>
            <person name="Dhami P.D."/>
            <person name="Dunn M."/>
            <person name="Ellington A.G."/>
            <person name="Frankland J.A."/>
            <person name="Fraser A."/>
            <person name="French L."/>
            <person name="Garner P."/>
            <person name="Grafham D.V."/>
            <person name="Griffiths C."/>
            <person name="Griffiths M.N.D."/>
            <person name="Gwilliam R."/>
            <person name="Hall R.E."/>
            <person name="Hammond S."/>
            <person name="Harley J.L."/>
            <person name="Heath P.D."/>
            <person name="Ho S."/>
            <person name="Holden J.L."/>
            <person name="Howden P.J."/>
            <person name="Huckle E."/>
            <person name="Hunt A.R."/>
            <person name="Hunt S.E."/>
            <person name="Jekosch K."/>
            <person name="Johnson C.M."/>
            <person name="Johnson D."/>
            <person name="Kay M.P."/>
            <person name="Kimberley A.M."/>
            <person name="King A."/>
            <person name="Knights A."/>
            <person name="Laird G.K."/>
            <person name="Lawlor S."/>
            <person name="Lehvaeslaiho M.H."/>
            <person name="Leversha M.A."/>
            <person name="Lloyd C."/>
            <person name="Lloyd D.M."/>
            <person name="Lovell J.D."/>
            <person name="Marsh V.L."/>
            <person name="Martin S.L."/>
            <person name="McConnachie L.J."/>
            <person name="McLay K."/>
            <person name="McMurray A.A."/>
            <person name="Milne S.A."/>
            <person name="Mistry D."/>
            <person name="Moore M.J.F."/>
            <person name="Mullikin J.C."/>
            <person name="Nickerson T."/>
            <person name="Oliver K."/>
            <person name="Parker A."/>
            <person name="Patel R."/>
            <person name="Pearce T.A.V."/>
            <person name="Peck A.I."/>
            <person name="Phillimore B.J.C.T."/>
            <person name="Prathalingam S.R."/>
            <person name="Plumb R.W."/>
            <person name="Ramsay H."/>
            <person name="Rice C.M."/>
            <person name="Ross M.T."/>
            <person name="Scott C.E."/>
            <person name="Sehra H.K."/>
            <person name="Shownkeen R."/>
            <person name="Sims S."/>
            <person name="Skuce C.D."/>
            <person name="Smith M.L."/>
            <person name="Soderlund C."/>
            <person name="Steward C.A."/>
            <person name="Sulston J.E."/>
            <person name="Swann R.M."/>
            <person name="Sycamore N."/>
            <person name="Taylor R."/>
            <person name="Tee L."/>
            <person name="Thomas D.W."/>
            <person name="Thorpe A."/>
            <person name="Tracey A."/>
            <person name="Tromans A.C."/>
            <person name="Vaudin M."/>
            <person name="Wall M."/>
            <person name="Wallis J.M."/>
            <person name="Whitehead S.L."/>
            <person name="Whittaker P."/>
            <person name="Willey D.L."/>
            <person name="Williams L."/>
            <person name="Williams S.A."/>
            <person name="Wilming L."/>
            <person name="Wray P.W."/>
            <person name="Hubbard T."/>
            <person name="Durbin R.M."/>
            <person name="Bentley D.R."/>
            <person name="Beck S."/>
            <person name="Rogers J."/>
        </authorList>
    </citation>
    <scope>NUCLEOTIDE SEQUENCE [LARGE SCALE GENOMIC DNA]</scope>
</reference>
<reference key="6">
    <citation type="journal article" date="2004" name="Genome Res.">
        <title>The status, quality, and expansion of the NIH full-length cDNA project: the Mammalian Gene Collection (MGC).</title>
        <authorList>
            <consortium name="The MGC Project Team"/>
        </authorList>
    </citation>
    <scope>NUCLEOTIDE SEQUENCE [LARGE SCALE MRNA]</scope>
    <source>
        <tissue>Liver</tissue>
    </source>
</reference>
<reference key="7">
    <citation type="journal article" date="2007" name="Arch. Biochem. Biophys.">
        <title>Purification and characterization of recombinant human liver glycolate oxidase.</title>
        <authorList>
            <person name="Vignaud C."/>
            <person name="Pietrancosta N."/>
            <person name="Williams E.L."/>
            <person name="Rumsby G."/>
            <person name="Lederer F."/>
        </authorList>
    </citation>
    <scope>FUNCTION</scope>
    <scope>CATALYTIC ACTIVITY</scope>
    <scope>COFACTOR</scope>
    <scope>ACTIVITY REGULATION</scope>
    <scope>BIOPHYSICOCHEMICAL PROPERTIES</scope>
    <scope>SUBSTRATE SPECIFICITY</scope>
    <scope>SUBUNIT</scope>
</reference>
<reference key="8">
    <citation type="journal article" date="2014" name="J. Proteomics">
        <title>An enzyme assisted RP-RPLC approach for in-depth analysis of human liver phosphoproteome.</title>
        <authorList>
            <person name="Bian Y."/>
            <person name="Song C."/>
            <person name="Cheng K."/>
            <person name="Dong M."/>
            <person name="Wang F."/>
            <person name="Huang J."/>
            <person name="Sun D."/>
            <person name="Wang L."/>
            <person name="Ye M."/>
            <person name="Zou H."/>
        </authorList>
    </citation>
    <scope>PHOSPHORYLATION [LARGE SCALE ANALYSIS] AT SER-230</scope>
    <scope>IDENTIFICATION BY MASS SPECTROMETRY [LARGE SCALE ANALYSIS]</scope>
    <source>
        <tissue>Liver</tissue>
    </source>
</reference>
<reference evidence="20 21 22" key="9">
    <citation type="journal article" date="2008" name="Biochemistry">
        <title>Active site and loop 4 movements within human glycolate oxidase: implications for substrate specificity and drug design.</title>
        <authorList>
            <person name="Murray M.S."/>
            <person name="Holmes R.P."/>
            <person name="Lowther W.T."/>
        </authorList>
    </citation>
    <scope>X-RAY CRYSTALLOGRAPHY (1.65 ANGSTROMS) IN COMPLEX WITH FMN; GLYOXYLATE AND 4-CARBOXY-5-DODECYLSULFANYL-1,2,3-TRIAZOLE</scope>
    <scope>FUNCTION</scope>
    <scope>COFACTOR</scope>
    <scope>CATALYTIC ACTIVITY</scope>
    <scope>BIOPHYSICOCHEMICAL PROPERTIES</scope>
</reference>
<reference evidence="23" key="10">
    <citation type="journal article" date="2009" name="Acta Crystallogr. F">
        <title>Structure of human glycolate oxidase in complex with the inhibitor 4-carboxy-5-[(4-chlorophenyl)sulfanyl]-1,2,3-thiadiazole.</title>
        <authorList>
            <person name="Bourhis J.M."/>
            <person name="Vignaud C."/>
            <person name="Pietrancosta N."/>
            <person name="Gueritte F."/>
            <person name="Guenard D."/>
            <person name="Lederer F."/>
            <person name="Lindqvist Y."/>
        </authorList>
    </citation>
    <scope>X-RAY CRYSTALLOGRAPHY (2.84 ANGSTROMS) IN COMPLEX WITH FMN AND THE SYNTHETIC INHIBITOR CCPST</scope>
</reference>
<reference evidence="19" key="11">
    <citation type="submission" date="2009-02" db="PDB data bank">
        <title>Crystal structure of human hydroxyacid oxidase 1.</title>
        <authorList>
            <consortium name="Structural genomics consortium (SGC)"/>
        </authorList>
    </citation>
    <scope>X-RAY CRYSTALLOGRAPHY (1.35 ANGSTROMS) IN COMPLEX WITH FMN AND GLYOXYLATE</scope>
</reference>
<sequence length="370" mass="40924">MLPRLICINDYEQHAKSVLPKSIYDYYRSGANDEETLADNIAAFSRWKLYPRMLRNVAETDLSTSVLGQRVSMPICVGATAMQRMAHVDGELATVRACQSLGTGMMLSSWATSSIEEVAEAGPEALRWLQLYIYKDREVTKKLVRQAEKMGYKAIFVTVDTPYLGNRLDDVRNRFKLPPQLRMKNFETSTLSFSPEENFGDDSGLAAYVAKAIDPSISWEDIKWLRRLTSLPIVAKGILRGDDAREAVKHGLNGILVSNHGARQLDGVPATIDVLPEIVEAVEGKVEVFLDGGVRKGTDVLKALALGAKAVFVGRPIVWGLAFQGEKGVQDVLEILKEEFRLAMALSGCQNVKVIDKTLVRKNPLAVSKI</sequence>
<proteinExistence type="evidence at protein level"/>
<name>HAOX1_HUMAN</name>
<protein>
    <recommendedName>
        <fullName evidence="14">2-Hydroxyacid oxidase 1</fullName>
        <shortName evidence="10">HAOX1</shortName>
        <ecNumber evidence="14 15 16 17">1.1.3.15</ecNumber>
    </recommendedName>
    <alternativeName>
        <fullName evidence="11">Glycolate oxidase</fullName>
        <shortName evidence="13">GO</shortName>
        <shortName evidence="12">GOX</shortName>
    </alternativeName>
    <alternativeName>
        <fullName evidence="12">Glyoxylate oxidase</fullName>
        <ecNumber evidence="14 16 17">1.2.3.5</ecNumber>
    </alternativeName>
</protein>
<evidence type="ECO:0000250" key="1">
    <source>
        <dbReference type="UniProtKB" id="Q9WU19"/>
    </source>
</evidence>
<evidence type="ECO:0000255" key="2"/>
<evidence type="ECO:0000255" key="3">
    <source>
        <dbReference type="PROSITE-ProRule" id="PRU00683"/>
    </source>
</evidence>
<evidence type="ECO:0000269" key="4">
    <source>
    </source>
</evidence>
<evidence type="ECO:0000269" key="5">
    <source>
    </source>
</evidence>
<evidence type="ECO:0000269" key="6">
    <source>
    </source>
</evidence>
<evidence type="ECO:0000269" key="7">
    <source>
    </source>
</evidence>
<evidence type="ECO:0000269" key="8">
    <source>
    </source>
</evidence>
<evidence type="ECO:0000269" key="9">
    <source ref="11"/>
</evidence>
<evidence type="ECO:0000303" key="10">
    <source>
    </source>
</evidence>
<evidence type="ECO:0000303" key="11">
    <source>
    </source>
</evidence>
<evidence type="ECO:0000303" key="12">
    <source>
    </source>
</evidence>
<evidence type="ECO:0000303" key="13">
    <source>
    </source>
</evidence>
<evidence type="ECO:0000305" key="14">
    <source>
    </source>
</evidence>
<evidence type="ECO:0000305" key="15">
    <source>
    </source>
</evidence>
<evidence type="ECO:0000305" key="16">
    <source>
    </source>
</evidence>
<evidence type="ECO:0000305" key="17">
    <source>
    </source>
</evidence>
<evidence type="ECO:0000312" key="18">
    <source>
        <dbReference type="HGNC" id="HGNC:4809"/>
    </source>
</evidence>
<evidence type="ECO:0007744" key="19">
    <source>
        <dbReference type="PDB" id="2NZL"/>
    </source>
</evidence>
<evidence type="ECO:0007744" key="20">
    <source>
        <dbReference type="PDB" id="2RDT"/>
    </source>
</evidence>
<evidence type="ECO:0007744" key="21">
    <source>
        <dbReference type="PDB" id="2RDU"/>
    </source>
</evidence>
<evidence type="ECO:0007744" key="22">
    <source>
        <dbReference type="PDB" id="2RDW"/>
    </source>
</evidence>
<evidence type="ECO:0007744" key="23">
    <source>
        <dbReference type="PDB" id="2W0U"/>
    </source>
</evidence>
<evidence type="ECO:0007744" key="24">
    <source>
    </source>
</evidence>
<evidence type="ECO:0007829" key="25">
    <source>
        <dbReference type="PDB" id="5QIF"/>
    </source>
</evidence>
<evidence type="ECO:0007829" key="26">
    <source>
        <dbReference type="PDB" id="6GMC"/>
    </source>
</evidence>
<evidence type="ECO:0007829" key="27">
    <source>
        <dbReference type="PDB" id="6W45"/>
    </source>
</evidence>
<evidence type="ECO:0007829" key="28">
    <source>
        <dbReference type="PDB" id="7M2O"/>
    </source>
</evidence>